<gene>
    <name type="primary">pdhR</name>
    <name type="ordered locus">SL1344_0151</name>
</gene>
<comment type="function">
    <text evidence="1">Transcriptional repressor for the pyruvate dehydrogenase complex genes aceEF and lpd.</text>
</comment>
<proteinExistence type="inferred from homology"/>
<keyword id="KW-0238">DNA-binding</keyword>
<keyword id="KW-0678">Repressor</keyword>
<keyword id="KW-0804">Transcription</keyword>
<keyword id="KW-0805">Transcription regulation</keyword>
<sequence>MAYSKIRQPKLSDVIEQQLEFLILEGTLRPGEKLPPERELAKQFDVSRPSLREAIQRLEAKGLLLRRQGGGTFVQSSLWQSFSDPLVELLSDHPESQFDLLETRHALEGIAAYYAALRSTDEDKDRIRELHHAIELAQESGDLDAESEAVLQYQIAVTEAAHNVVLLHLLRCMEPMLAQNVRQNFELLYARREMLPLVSTHRTRIFEAIMAGKPEEAREASHRHLAFIEEIMLDRSREESRRERALRRLEQRKN</sequence>
<protein>
    <recommendedName>
        <fullName>Pyruvate dehydrogenase complex repressor</fullName>
    </recommendedName>
</protein>
<feature type="chain" id="PRO_0000405421" description="Pyruvate dehydrogenase complex repressor">
    <location>
        <begin position="1"/>
        <end position="254"/>
    </location>
</feature>
<feature type="domain" description="HTH gntR-type" evidence="2">
    <location>
        <begin position="9"/>
        <end position="77"/>
    </location>
</feature>
<feature type="DNA-binding region" description="H-T-H motif" evidence="2">
    <location>
        <begin position="37"/>
        <end position="56"/>
    </location>
</feature>
<feature type="sequence conflict" description="In Ref. 1; CAB89840." evidence="3" ref="1">
    <original>E</original>
    <variation>K</variation>
    <location>
        <position position="135"/>
    </location>
</feature>
<name>PDHR_SALTS</name>
<organism>
    <name type="scientific">Salmonella typhimurium (strain SL1344)</name>
    <dbReference type="NCBI Taxonomy" id="216597"/>
    <lineage>
        <taxon>Bacteria</taxon>
        <taxon>Pseudomonadati</taxon>
        <taxon>Pseudomonadota</taxon>
        <taxon>Gammaproteobacteria</taxon>
        <taxon>Enterobacterales</taxon>
        <taxon>Enterobacteriaceae</taxon>
        <taxon>Salmonella</taxon>
    </lineage>
</organism>
<reference key="1">
    <citation type="submission" date="1999-05" db="EMBL/GenBank/DDBJ databases">
        <title>Characterization of a Salmonella-specific region located between ampE and aroP genes.</title>
        <authorList>
            <person name="Cano D."/>
            <person name="Casadesus J."/>
            <person name="Garcia-del Portillo F."/>
        </authorList>
    </citation>
    <scope>NUCLEOTIDE SEQUENCE [GENOMIC DNA]</scope>
    <source>
        <strain>SL1344</strain>
    </source>
</reference>
<reference key="2">
    <citation type="journal article" date="2012" name="Proc. Natl. Acad. Sci. U.S.A.">
        <title>The transcriptional landscape and small RNAs of Salmonella enterica serovar Typhimurium.</title>
        <authorList>
            <person name="Kroger C."/>
            <person name="Dillon S.C."/>
            <person name="Cameron A.D."/>
            <person name="Papenfort K."/>
            <person name="Sivasankaran S.K."/>
            <person name="Hokamp K."/>
            <person name="Chao Y."/>
            <person name="Sittka A."/>
            <person name="Hebrard M."/>
            <person name="Handler K."/>
            <person name="Colgan A."/>
            <person name="Leekitcharoenphon P."/>
            <person name="Langridge G.C."/>
            <person name="Lohan A.J."/>
            <person name="Loftus B."/>
            <person name="Lucchini S."/>
            <person name="Ussery D.W."/>
            <person name="Dorman C.J."/>
            <person name="Thomson N.R."/>
            <person name="Vogel J."/>
            <person name="Hinton J.C."/>
        </authorList>
    </citation>
    <scope>NUCLEOTIDE SEQUENCE [LARGE SCALE GENOMIC DNA]</scope>
    <source>
        <strain>SL1344</strain>
    </source>
</reference>
<dbReference type="EMBL" id="AJ242516">
    <property type="protein sequence ID" value="CAB89840.1"/>
    <property type="molecule type" value="Genomic_DNA"/>
</dbReference>
<dbReference type="EMBL" id="FQ312003">
    <property type="protein sequence ID" value="CBW16254.1"/>
    <property type="molecule type" value="Genomic_DNA"/>
</dbReference>
<dbReference type="RefSeq" id="WP_000331771.1">
    <property type="nucleotide sequence ID" value="NZ_QASL01000007.1"/>
</dbReference>
<dbReference type="SMR" id="E1W823"/>
<dbReference type="KEGG" id="sey:SL1344_0151"/>
<dbReference type="PATRIC" id="fig|216597.6.peg.168"/>
<dbReference type="HOGENOM" id="CLU_017584_9_5_6"/>
<dbReference type="BioCyc" id="SENT216597:SL1344_RS00770-MONOMER"/>
<dbReference type="Proteomes" id="UP000008962">
    <property type="component" value="Chromosome"/>
</dbReference>
<dbReference type="GO" id="GO:0003677">
    <property type="term" value="F:DNA binding"/>
    <property type="evidence" value="ECO:0007669"/>
    <property type="project" value="UniProtKB-KW"/>
</dbReference>
<dbReference type="GO" id="GO:0003700">
    <property type="term" value="F:DNA-binding transcription factor activity"/>
    <property type="evidence" value="ECO:0007669"/>
    <property type="project" value="InterPro"/>
</dbReference>
<dbReference type="CDD" id="cd07377">
    <property type="entry name" value="WHTH_GntR"/>
    <property type="match status" value="1"/>
</dbReference>
<dbReference type="FunFam" id="1.10.10.10:FF:000048">
    <property type="entry name" value="Pyruvate dehydrogenase complex transcriptional repressor"/>
    <property type="match status" value="1"/>
</dbReference>
<dbReference type="FunFam" id="1.20.120.530:FF:000001">
    <property type="entry name" value="Pyruvate dehydrogenase complex transcriptional repressor"/>
    <property type="match status" value="1"/>
</dbReference>
<dbReference type="Gene3D" id="1.20.120.530">
    <property type="entry name" value="GntR ligand-binding domain-like"/>
    <property type="match status" value="1"/>
</dbReference>
<dbReference type="Gene3D" id="1.10.10.10">
    <property type="entry name" value="Winged helix-like DNA-binding domain superfamily/Winged helix DNA-binding domain"/>
    <property type="match status" value="1"/>
</dbReference>
<dbReference type="InterPro" id="IPR011711">
    <property type="entry name" value="GntR_C"/>
</dbReference>
<dbReference type="InterPro" id="IPR008920">
    <property type="entry name" value="TF_FadR/GntR_C"/>
</dbReference>
<dbReference type="InterPro" id="IPR000524">
    <property type="entry name" value="Tscrpt_reg_HTH_GntR"/>
</dbReference>
<dbReference type="InterPro" id="IPR036388">
    <property type="entry name" value="WH-like_DNA-bd_sf"/>
</dbReference>
<dbReference type="InterPro" id="IPR036390">
    <property type="entry name" value="WH_DNA-bd_sf"/>
</dbReference>
<dbReference type="NCBIfam" id="NF007001">
    <property type="entry name" value="PRK09464.1"/>
    <property type="match status" value="1"/>
</dbReference>
<dbReference type="PANTHER" id="PTHR43537:SF34">
    <property type="entry name" value="PYRUVATE DEHYDROGENASE COMPLEX REPRESSOR"/>
    <property type="match status" value="1"/>
</dbReference>
<dbReference type="PANTHER" id="PTHR43537">
    <property type="entry name" value="TRANSCRIPTIONAL REGULATOR, GNTR FAMILY"/>
    <property type="match status" value="1"/>
</dbReference>
<dbReference type="Pfam" id="PF07729">
    <property type="entry name" value="FCD"/>
    <property type="match status" value="1"/>
</dbReference>
<dbReference type="Pfam" id="PF00392">
    <property type="entry name" value="GntR"/>
    <property type="match status" value="1"/>
</dbReference>
<dbReference type="PRINTS" id="PR00035">
    <property type="entry name" value="HTHGNTR"/>
</dbReference>
<dbReference type="SMART" id="SM00895">
    <property type="entry name" value="FCD"/>
    <property type="match status" value="1"/>
</dbReference>
<dbReference type="SMART" id="SM00345">
    <property type="entry name" value="HTH_GNTR"/>
    <property type="match status" value="1"/>
</dbReference>
<dbReference type="SUPFAM" id="SSF48008">
    <property type="entry name" value="GntR ligand-binding domain-like"/>
    <property type="match status" value="1"/>
</dbReference>
<dbReference type="SUPFAM" id="SSF46785">
    <property type="entry name" value="Winged helix' DNA-binding domain"/>
    <property type="match status" value="1"/>
</dbReference>
<dbReference type="PROSITE" id="PS50949">
    <property type="entry name" value="HTH_GNTR"/>
    <property type="match status" value="1"/>
</dbReference>
<accession>E1W823</accession>
<accession>P0A2S2</accession>
<accession>Q9L4H9</accession>
<evidence type="ECO:0000250" key="1"/>
<evidence type="ECO:0000255" key="2">
    <source>
        <dbReference type="PROSITE-ProRule" id="PRU00307"/>
    </source>
</evidence>
<evidence type="ECO:0000305" key="3"/>